<organism>
    <name type="scientific">Myxococcus xanthus (strain DK1622)</name>
    <dbReference type="NCBI Taxonomy" id="246197"/>
    <lineage>
        <taxon>Bacteria</taxon>
        <taxon>Pseudomonadati</taxon>
        <taxon>Myxococcota</taxon>
        <taxon>Myxococcia</taxon>
        <taxon>Myxococcales</taxon>
        <taxon>Cystobacterineae</taxon>
        <taxon>Myxococcaceae</taxon>
        <taxon>Myxococcus</taxon>
    </lineage>
</organism>
<keyword id="KW-1185">Reference proteome</keyword>
<keyword id="KW-0678">Repressor</keyword>
<keyword id="KW-0687">Ribonucleoprotein</keyword>
<keyword id="KW-0689">Ribosomal protein</keyword>
<keyword id="KW-0694">RNA-binding</keyword>
<keyword id="KW-0699">rRNA-binding</keyword>
<keyword id="KW-0810">Translation regulation</keyword>
<keyword id="KW-0820">tRNA-binding</keyword>
<gene>
    <name evidence="1" type="primary">rplA</name>
    <name type="ordered locus">MXAN_3074</name>
</gene>
<proteinExistence type="inferred from homology"/>
<comment type="function">
    <text evidence="1">Binds directly to 23S rRNA. The L1 stalk is quite mobile in the ribosome, and is involved in E site tRNA release.</text>
</comment>
<comment type="function">
    <text evidence="1">Protein L1 is also a translational repressor protein, it controls the translation of the L11 operon by binding to its mRNA.</text>
</comment>
<comment type="subunit">
    <text evidence="1">Part of the 50S ribosomal subunit.</text>
</comment>
<comment type="similarity">
    <text evidence="1">Belongs to the universal ribosomal protein uL1 family.</text>
</comment>
<dbReference type="EMBL" id="CP000113">
    <property type="protein sequence ID" value="ABF85988.1"/>
    <property type="molecule type" value="Genomic_DNA"/>
</dbReference>
<dbReference type="RefSeq" id="WP_011553124.1">
    <property type="nucleotide sequence ID" value="NC_008095.1"/>
</dbReference>
<dbReference type="SMR" id="Q1D7U6"/>
<dbReference type="STRING" id="246197.MXAN_3074"/>
<dbReference type="EnsemblBacteria" id="ABF85988">
    <property type="protein sequence ID" value="ABF85988"/>
    <property type="gene ID" value="MXAN_3074"/>
</dbReference>
<dbReference type="GeneID" id="41360436"/>
<dbReference type="KEGG" id="mxa:MXAN_3074"/>
<dbReference type="eggNOG" id="COG0081">
    <property type="taxonomic scope" value="Bacteria"/>
</dbReference>
<dbReference type="HOGENOM" id="CLU_062853_0_0_7"/>
<dbReference type="OrthoDB" id="9803740at2"/>
<dbReference type="Proteomes" id="UP000002402">
    <property type="component" value="Chromosome"/>
</dbReference>
<dbReference type="GO" id="GO:0022625">
    <property type="term" value="C:cytosolic large ribosomal subunit"/>
    <property type="evidence" value="ECO:0007669"/>
    <property type="project" value="TreeGrafter"/>
</dbReference>
<dbReference type="GO" id="GO:0019843">
    <property type="term" value="F:rRNA binding"/>
    <property type="evidence" value="ECO:0007669"/>
    <property type="project" value="UniProtKB-UniRule"/>
</dbReference>
<dbReference type="GO" id="GO:0003735">
    <property type="term" value="F:structural constituent of ribosome"/>
    <property type="evidence" value="ECO:0007669"/>
    <property type="project" value="InterPro"/>
</dbReference>
<dbReference type="GO" id="GO:0000049">
    <property type="term" value="F:tRNA binding"/>
    <property type="evidence" value="ECO:0007669"/>
    <property type="project" value="UniProtKB-KW"/>
</dbReference>
<dbReference type="GO" id="GO:0006417">
    <property type="term" value="P:regulation of translation"/>
    <property type="evidence" value="ECO:0007669"/>
    <property type="project" value="UniProtKB-KW"/>
</dbReference>
<dbReference type="GO" id="GO:0006412">
    <property type="term" value="P:translation"/>
    <property type="evidence" value="ECO:0007669"/>
    <property type="project" value="UniProtKB-UniRule"/>
</dbReference>
<dbReference type="CDD" id="cd00403">
    <property type="entry name" value="Ribosomal_L1"/>
    <property type="match status" value="1"/>
</dbReference>
<dbReference type="FunFam" id="3.40.50.790:FF:000001">
    <property type="entry name" value="50S ribosomal protein L1"/>
    <property type="match status" value="1"/>
</dbReference>
<dbReference type="Gene3D" id="3.30.190.20">
    <property type="match status" value="1"/>
</dbReference>
<dbReference type="Gene3D" id="3.40.50.790">
    <property type="match status" value="1"/>
</dbReference>
<dbReference type="HAMAP" id="MF_01318_B">
    <property type="entry name" value="Ribosomal_uL1_B"/>
    <property type="match status" value="1"/>
</dbReference>
<dbReference type="InterPro" id="IPR005878">
    <property type="entry name" value="Ribosom_uL1_bac-type"/>
</dbReference>
<dbReference type="InterPro" id="IPR002143">
    <property type="entry name" value="Ribosomal_uL1"/>
</dbReference>
<dbReference type="InterPro" id="IPR023674">
    <property type="entry name" value="Ribosomal_uL1-like"/>
</dbReference>
<dbReference type="InterPro" id="IPR028364">
    <property type="entry name" value="Ribosomal_uL1/biogenesis"/>
</dbReference>
<dbReference type="InterPro" id="IPR016095">
    <property type="entry name" value="Ribosomal_uL1_3-a/b-sand"/>
</dbReference>
<dbReference type="InterPro" id="IPR023673">
    <property type="entry name" value="Ribosomal_uL1_CS"/>
</dbReference>
<dbReference type="NCBIfam" id="TIGR01169">
    <property type="entry name" value="rplA_bact"/>
    <property type="match status" value="1"/>
</dbReference>
<dbReference type="PANTHER" id="PTHR36427">
    <property type="entry name" value="54S RIBOSOMAL PROTEIN L1, MITOCHONDRIAL"/>
    <property type="match status" value="1"/>
</dbReference>
<dbReference type="PANTHER" id="PTHR36427:SF3">
    <property type="entry name" value="LARGE RIBOSOMAL SUBUNIT PROTEIN UL1M"/>
    <property type="match status" value="1"/>
</dbReference>
<dbReference type="Pfam" id="PF00687">
    <property type="entry name" value="Ribosomal_L1"/>
    <property type="match status" value="1"/>
</dbReference>
<dbReference type="PIRSF" id="PIRSF002155">
    <property type="entry name" value="Ribosomal_L1"/>
    <property type="match status" value="1"/>
</dbReference>
<dbReference type="SUPFAM" id="SSF56808">
    <property type="entry name" value="Ribosomal protein L1"/>
    <property type="match status" value="1"/>
</dbReference>
<dbReference type="PROSITE" id="PS01199">
    <property type="entry name" value="RIBOSOMAL_L1"/>
    <property type="match status" value="1"/>
</dbReference>
<name>RL1_MYXXD</name>
<protein>
    <recommendedName>
        <fullName evidence="1">Large ribosomal subunit protein uL1</fullName>
    </recommendedName>
    <alternativeName>
        <fullName evidence="2">50S ribosomal protein L1</fullName>
    </alternativeName>
</protein>
<evidence type="ECO:0000255" key="1">
    <source>
        <dbReference type="HAMAP-Rule" id="MF_01318"/>
    </source>
</evidence>
<evidence type="ECO:0000305" key="2"/>
<accession>Q1D7U6</accession>
<reference key="1">
    <citation type="journal article" date="2006" name="Proc. Natl. Acad. Sci. U.S.A.">
        <title>Evolution of sensory complexity recorded in a myxobacterial genome.</title>
        <authorList>
            <person name="Goldman B.S."/>
            <person name="Nierman W.C."/>
            <person name="Kaiser D."/>
            <person name="Slater S.C."/>
            <person name="Durkin A.S."/>
            <person name="Eisen J.A."/>
            <person name="Ronning C.M."/>
            <person name="Barbazuk W.B."/>
            <person name="Blanchard M."/>
            <person name="Field C."/>
            <person name="Halling C."/>
            <person name="Hinkle G."/>
            <person name="Iartchuk O."/>
            <person name="Kim H.S."/>
            <person name="Mackenzie C."/>
            <person name="Madupu R."/>
            <person name="Miller N."/>
            <person name="Shvartsbeyn A."/>
            <person name="Sullivan S.A."/>
            <person name="Vaudin M."/>
            <person name="Wiegand R."/>
            <person name="Kaplan H.B."/>
        </authorList>
    </citation>
    <scope>NUCLEOTIDE SEQUENCE [LARGE SCALE GENOMIC DNA]</scope>
    <source>
        <strain>DK1622</strain>
    </source>
</reference>
<feature type="chain" id="PRO_0000308058" description="Large ribosomal subunit protein uL1">
    <location>
        <begin position="1"/>
        <end position="237"/>
    </location>
</feature>
<sequence>MAKTGKKFRAAAALVDRDKRYAVAEGFQLLKKTVEARSTKYDQTVDVSINLGVDPKHADQMVRGAVVLPHGTGATVRVAVFAKGEKATDATNAGADVVGAEDLQKRIEEGFLDFDTVIATPDMMGVVGRLGKVLGPRGLMPNPKVGTVTMDVAKAIRDAKGGKVDFRAEKAGIVHAKLGKSSFEVEKLEANFNALVDLVMKLKPAAAKGVYLQGIAISSSMGPGIKLDTMEIKTRHG</sequence>